<evidence type="ECO:0000250" key="1">
    <source>
        <dbReference type="UniProtKB" id="P75617"/>
    </source>
</evidence>
<evidence type="ECO:0000269" key="2">
    <source>
    </source>
</evidence>
<evidence type="ECO:0000303" key="3">
    <source>
    </source>
</evidence>
<evidence type="ECO:0000305" key="4"/>
<keyword id="KW-1185">Reference proteome</keyword>
<gene>
    <name evidence="3" type="primary">yaaW</name>
    <name type="ordered locus">Z0011</name>
    <name type="ordered locus">ECs0012</name>
</gene>
<accession>P58316</accession>
<organism>
    <name type="scientific">Escherichia coli O157:H7</name>
    <dbReference type="NCBI Taxonomy" id="83334"/>
    <lineage>
        <taxon>Bacteria</taxon>
        <taxon>Pseudomonadati</taxon>
        <taxon>Pseudomonadota</taxon>
        <taxon>Gammaproteobacteria</taxon>
        <taxon>Enterobacterales</taxon>
        <taxon>Enterobacteriaceae</taxon>
        <taxon>Escherichia</taxon>
    </lineage>
</organism>
<sequence>MNVNYLNDSDLDFLQHCSEEQLANFARLLTHNEKGKTRLSSVLMRNELFKSMEGHPEQHRRNWQLIAGELQHFGGDSIANKLRGHGKLYRAILLDVSKRLKLKADKEMSTFEIEQQLLEQFLRNTWKKMDEEHKQEFLHAVDARVNELEELLPLLMKDKLLAKGVSHLLSSQLTRILRTHAAMSVLGHGLLRGAGLGGPVGAALNGVKAVSGSSYRVTIPAVLQIACLRRMVSATQV</sequence>
<reference key="1">
    <citation type="journal article" date="2001" name="Nature">
        <title>Genome sequence of enterohaemorrhagic Escherichia coli O157:H7.</title>
        <authorList>
            <person name="Perna N.T."/>
            <person name="Plunkett G. III"/>
            <person name="Burland V."/>
            <person name="Mau B."/>
            <person name="Glasner J.D."/>
            <person name="Rose D.J."/>
            <person name="Mayhew G.F."/>
            <person name="Evans P.S."/>
            <person name="Gregor J."/>
            <person name="Kirkpatrick H.A."/>
            <person name="Posfai G."/>
            <person name="Hackett J."/>
            <person name="Klink S."/>
            <person name="Boutin A."/>
            <person name="Shao Y."/>
            <person name="Miller L."/>
            <person name="Grotbeck E.J."/>
            <person name="Davis N.W."/>
            <person name="Lim A."/>
            <person name="Dimalanta E.T."/>
            <person name="Potamousis K."/>
            <person name="Apodaca J."/>
            <person name="Anantharaman T.S."/>
            <person name="Lin J."/>
            <person name="Yen G."/>
            <person name="Schwartz D.C."/>
            <person name="Welch R.A."/>
            <person name="Blattner F.R."/>
        </authorList>
    </citation>
    <scope>NUCLEOTIDE SEQUENCE [LARGE SCALE GENOMIC DNA]</scope>
    <source>
        <strain>O157:H7 / EDL933 / ATCC 700927 / EHEC</strain>
    </source>
</reference>
<reference key="2">
    <citation type="journal article" date="2001" name="DNA Res.">
        <title>Complete genome sequence of enterohemorrhagic Escherichia coli O157:H7 and genomic comparison with a laboratory strain K-12.</title>
        <authorList>
            <person name="Hayashi T."/>
            <person name="Makino K."/>
            <person name="Ohnishi M."/>
            <person name="Kurokawa K."/>
            <person name="Ishii K."/>
            <person name="Yokoyama K."/>
            <person name="Han C.-G."/>
            <person name="Ohtsubo E."/>
            <person name="Nakayama K."/>
            <person name="Murata T."/>
            <person name="Tanaka M."/>
            <person name="Tobe T."/>
            <person name="Iida T."/>
            <person name="Takami H."/>
            <person name="Honda T."/>
            <person name="Sasakawa C."/>
            <person name="Ogasawara N."/>
            <person name="Yasunaga T."/>
            <person name="Kuhara S."/>
            <person name="Shiba T."/>
            <person name="Hattori M."/>
            <person name="Shinagawa H."/>
        </authorList>
    </citation>
    <scope>NUCLEOTIDE SEQUENCE [LARGE SCALE GENOMIC DNA]</scope>
    <source>
        <strain>O157:H7 / Sakai / RIMD 0509952 / EHEC</strain>
    </source>
</reference>
<reference key="3">
    <citation type="journal article" date="2014" name="FEMS Microbiol. Lett.">
        <title>Phenotype of htgA (mbiA), a recently evolved orphan gene of Escherichia coli and Shigella, completely overlapping in antisense to yaaW.</title>
        <authorList>
            <person name="Fellner L."/>
            <person name="Bechtel N."/>
            <person name="Witting M.A."/>
            <person name="Simon S."/>
            <person name="Schmitt-Kopplin P."/>
            <person name="Keim D."/>
            <person name="Scherer S."/>
            <person name="Neuhaus K."/>
        </authorList>
    </citation>
    <scope>DISRUPTION PHENOTYPE</scope>
    <source>
        <strain>O157:H7 / EDL933 / ATCC 700927 / EHEC</strain>
    </source>
</reference>
<name>YAAW_ECO57</name>
<dbReference type="EMBL" id="AE005174">
    <property type="protein sequence ID" value="AAG54311.1"/>
    <property type="molecule type" value="Genomic_DNA"/>
</dbReference>
<dbReference type="EMBL" id="BA000007">
    <property type="protein sequence ID" value="BAB33434.1"/>
    <property type="molecule type" value="Genomic_DNA"/>
</dbReference>
<dbReference type="PIR" id="C85481">
    <property type="entry name" value="C85481"/>
</dbReference>
<dbReference type="PIR" id="C90630">
    <property type="entry name" value="C90630"/>
</dbReference>
<dbReference type="RefSeq" id="NP_308038.1">
    <property type="nucleotide sequence ID" value="NC_002695.1"/>
</dbReference>
<dbReference type="SMR" id="P58316"/>
<dbReference type="STRING" id="155864.Z0011"/>
<dbReference type="GeneID" id="913403"/>
<dbReference type="KEGG" id="ece:Z0011"/>
<dbReference type="KEGG" id="ecs:ECs_0012"/>
<dbReference type="PATRIC" id="fig|386585.9.peg.108"/>
<dbReference type="eggNOG" id="COG4735">
    <property type="taxonomic scope" value="Bacteria"/>
</dbReference>
<dbReference type="HOGENOM" id="CLU_072312_0_1_6"/>
<dbReference type="OMA" id="HIACLRQ"/>
<dbReference type="Proteomes" id="UP000000558">
    <property type="component" value="Chromosome"/>
</dbReference>
<dbReference type="Proteomes" id="UP000002519">
    <property type="component" value="Chromosome"/>
</dbReference>
<dbReference type="InterPro" id="IPR025217">
    <property type="entry name" value="DUF3944"/>
</dbReference>
<dbReference type="InterPro" id="IPR021150">
    <property type="entry name" value="Ubiq_cyt_c_chap"/>
</dbReference>
<dbReference type="NCBIfam" id="NF007593">
    <property type="entry name" value="PRK10236.1"/>
    <property type="match status" value="1"/>
</dbReference>
<dbReference type="Pfam" id="PF13099">
    <property type="entry name" value="DUF3944"/>
    <property type="match status" value="1"/>
</dbReference>
<dbReference type="Pfam" id="PF03981">
    <property type="entry name" value="Ubiq_cyt_C_chap"/>
    <property type="match status" value="1"/>
</dbReference>
<comment type="disruption phenotype">
    <text evidence="2">Strand-specific deletion mutant, which disrupts only yaaW, shows no difference in growth compared with wild-type strain at 37 degrees Celsius or after heat shock. Biofilm formation is increased at 37 degrees Celsius.</text>
</comment>
<comment type="similarity">
    <text evidence="4">Belongs to the UPF0174 family.</text>
</comment>
<comment type="caution">
    <text evidence="1">Gene overlaps with the mbiA open reading frame on the opposite strand. Disruptions of one gene are also usually disruptions in the other.</text>
</comment>
<protein>
    <recommendedName>
        <fullName evidence="4">UPF0174 protein YaaW</fullName>
    </recommendedName>
</protein>
<proteinExistence type="inferred from homology"/>
<feature type="chain" id="PRO_0000216420" description="UPF0174 protein YaaW">
    <location>
        <begin position="1"/>
        <end position="237"/>
    </location>
</feature>